<keyword id="KW-0240">DNA-directed RNA polymerase</keyword>
<keyword id="KW-0548">Nucleotidyltransferase</keyword>
<keyword id="KW-1185">Reference proteome</keyword>
<keyword id="KW-0804">Transcription</keyword>
<keyword id="KW-0808">Transferase</keyword>
<feature type="chain" id="PRO_1000005884" description="DNA-directed RNA polymerase subunit omega">
    <location>
        <begin position="1"/>
        <end position="107"/>
    </location>
</feature>
<feature type="region of interest" description="Disordered" evidence="2">
    <location>
        <begin position="81"/>
        <end position="107"/>
    </location>
</feature>
<accession>Q0A5V4</accession>
<reference key="1">
    <citation type="submission" date="2006-08" db="EMBL/GenBank/DDBJ databases">
        <title>Complete sequence of Alkalilimnicola ehrilichei MLHE-1.</title>
        <authorList>
            <person name="Copeland A."/>
            <person name="Lucas S."/>
            <person name="Lapidus A."/>
            <person name="Barry K."/>
            <person name="Detter J.C."/>
            <person name="Glavina del Rio T."/>
            <person name="Hammon N."/>
            <person name="Israni S."/>
            <person name="Dalin E."/>
            <person name="Tice H."/>
            <person name="Pitluck S."/>
            <person name="Sims D."/>
            <person name="Brettin T."/>
            <person name="Bruce D."/>
            <person name="Han C."/>
            <person name="Tapia R."/>
            <person name="Gilna P."/>
            <person name="Schmutz J."/>
            <person name="Larimer F."/>
            <person name="Land M."/>
            <person name="Hauser L."/>
            <person name="Kyrpides N."/>
            <person name="Mikhailova N."/>
            <person name="Oremland R.S."/>
            <person name="Hoeft S.E."/>
            <person name="Switzer-Blum J."/>
            <person name="Kulp T."/>
            <person name="King G."/>
            <person name="Tabita R."/>
            <person name="Witte B."/>
            <person name="Santini J.M."/>
            <person name="Basu P."/>
            <person name="Hollibaugh J.T."/>
            <person name="Xie G."/>
            <person name="Stolz J.F."/>
            <person name="Richardson P."/>
        </authorList>
    </citation>
    <scope>NUCLEOTIDE SEQUENCE [LARGE SCALE GENOMIC DNA]</scope>
    <source>
        <strain>ATCC BAA-1101 / DSM 17681 / MLHE-1</strain>
    </source>
</reference>
<dbReference type="EC" id="2.7.7.6" evidence="1"/>
<dbReference type="EMBL" id="CP000453">
    <property type="protein sequence ID" value="ABI57783.1"/>
    <property type="molecule type" value="Genomic_DNA"/>
</dbReference>
<dbReference type="RefSeq" id="WP_011630176.1">
    <property type="nucleotide sequence ID" value="NC_008340.1"/>
</dbReference>
<dbReference type="SMR" id="Q0A5V4"/>
<dbReference type="KEGG" id="aeh:Mlg_2443"/>
<dbReference type="eggNOG" id="COG1758">
    <property type="taxonomic scope" value="Bacteria"/>
</dbReference>
<dbReference type="HOGENOM" id="CLU_125406_5_3_6"/>
<dbReference type="OrthoDB" id="9796300at2"/>
<dbReference type="Proteomes" id="UP000001962">
    <property type="component" value="Chromosome"/>
</dbReference>
<dbReference type="GO" id="GO:0000428">
    <property type="term" value="C:DNA-directed RNA polymerase complex"/>
    <property type="evidence" value="ECO:0007669"/>
    <property type="project" value="UniProtKB-KW"/>
</dbReference>
<dbReference type="GO" id="GO:0003677">
    <property type="term" value="F:DNA binding"/>
    <property type="evidence" value="ECO:0007669"/>
    <property type="project" value="UniProtKB-UniRule"/>
</dbReference>
<dbReference type="GO" id="GO:0003899">
    <property type="term" value="F:DNA-directed RNA polymerase activity"/>
    <property type="evidence" value="ECO:0007669"/>
    <property type="project" value="UniProtKB-UniRule"/>
</dbReference>
<dbReference type="GO" id="GO:0006351">
    <property type="term" value="P:DNA-templated transcription"/>
    <property type="evidence" value="ECO:0007669"/>
    <property type="project" value="UniProtKB-UniRule"/>
</dbReference>
<dbReference type="Gene3D" id="3.90.940.10">
    <property type="match status" value="1"/>
</dbReference>
<dbReference type="HAMAP" id="MF_00366">
    <property type="entry name" value="RNApol_bact_RpoZ"/>
    <property type="match status" value="1"/>
</dbReference>
<dbReference type="InterPro" id="IPR003716">
    <property type="entry name" value="DNA-dir_RNA_pol_omega"/>
</dbReference>
<dbReference type="InterPro" id="IPR006110">
    <property type="entry name" value="Pol_omega/Rpo6/RPB6"/>
</dbReference>
<dbReference type="InterPro" id="IPR036161">
    <property type="entry name" value="RPB6/omega-like_sf"/>
</dbReference>
<dbReference type="NCBIfam" id="TIGR00690">
    <property type="entry name" value="rpoZ"/>
    <property type="match status" value="1"/>
</dbReference>
<dbReference type="PANTHER" id="PTHR34476">
    <property type="entry name" value="DNA-DIRECTED RNA POLYMERASE SUBUNIT OMEGA"/>
    <property type="match status" value="1"/>
</dbReference>
<dbReference type="PANTHER" id="PTHR34476:SF1">
    <property type="entry name" value="DNA-DIRECTED RNA POLYMERASE SUBUNIT OMEGA"/>
    <property type="match status" value="1"/>
</dbReference>
<dbReference type="Pfam" id="PF01192">
    <property type="entry name" value="RNA_pol_Rpb6"/>
    <property type="match status" value="1"/>
</dbReference>
<dbReference type="SMART" id="SM01409">
    <property type="entry name" value="RNA_pol_Rpb6"/>
    <property type="match status" value="1"/>
</dbReference>
<dbReference type="SUPFAM" id="SSF63562">
    <property type="entry name" value="RPB6/omega subunit-like"/>
    <property type="match status" value="1"/>
</dbReference>
<gene>
    <name evidence="1" type="primary">rpoZ</name>
    <name type="ordered locus">Mlg_2443</name>
</gene>
<organism>
    <name type="scientific">Alkalilimnicola ehrlichii (strain ATCC BAA-1101 / DSM 17681 / MLHE-1)</name>
    <dbReference type="NCBI Taxonomy" id="187272"/>
    <lineage>
        <taxon>Bacteria</taxon>
        <taxon>Pseudomonadati</taxon>
        <taxon>Pseudomonadota</taxon>
        <taxon>Gammaproteobacteria</taxon>
        <taxon>Chromatiales</taxon>
        <taxon>Ectothiorhodospiraceae</taxon>
        <taxon>Alkalilimnicola</taxon>
    </lineage>
</organism>
<sequence>MARVTVEDCLTNMDNRFQLVLVGSKRARQLANGAEAHVDWDNDKPTVVALREIADGHVGREILEEQPEPVLDFEAEASALMEEEAAKGNADAGQGEGDAPKTPGQDG</sequence>
<name>RPOZ_ALKEH</name>
<evidence type="ECO:0000255" key="1">
    <source>
        <dbReference type="HAMAP-Rule" id="MF_00366"/>
    </source>
</evidence>
<evidence type="ECO:0000256" key="2">
    <source>
        <dbReference type="SAM" id="MobiDB-lite"/>
    </source>
</evidence>
<comment type="function">
    <text evidence="1">Promotes RNA polymerase assembly. Latches the N- and C-terminal regions of the beta' subunit thereby facilitating its interaction with the beta and alpha subunits.</text>
</comment>
<comment type="catalytic activity">
    <reaction evidence="1">
        <text>RNA(n) + a ribonucleoside 5'-triphosphate = RNA(n+1) + diphosphate</text>
        <dbReference type="Rhea" id="RHEA:21248"/>
        <dbReference type="Rhea" id="RHEA-COMP:14527"/>
        <dbReference type="Rhea" id="RHEA-COMP:17342"/>
        <dbReference type="ChEBI" id="CHEBI:33019"/>
        <dbReference type="ChEBI" id="CHEBI:61557"/>
        <dbReference type="ChEBI" id="CHEBI:140395"/>
        <dbReference type="EC" id="2.7.7.6"/>
    </reaction>
</comment>
<comment type="subunit">
    <text evidence="1">The RNAP catalytic core consists of 2 alpha, 1 beta, 1 beta' and 1 omega subunit. When a sigma factor is associated with the core the holoenzyme is formed, which can initiate transcription.</text>
</comment>
<comment type="similarity">
    <text evidence="1">Belongs to the RNA polymerase subunit omega family.</text>
</comment>
<proteinExistence type="inferred from homology"/>
<protein>
    <recommendedName>
        <fullName evidence="1">DNA-directed RNA polymerase subunit omega</fullName>
        <shortName evidence="1">RNAP omega subunit</shortName>
        <ecNumber evidence="1">2.7.7.6</ecNumber>
    </recommendedName>
    <alternativeName>
        <fullName evidence="1">RNA polymerase omega subunit</fullName>
    </alternativeName>
    <alternativeName>
        <fullName evidence="1">Transcriptase subunit omega</fullName>
    </alternativeName>
</protein>